<name>RSMG_STAA1</name>
<organism>
    <name type="scientific">Staphylococcus aureus (strain Mu3 / ATCC 700698)</name>
    <dbReference type="NCBI Taxonomy" id="418127"/>
    <lineage>
        <taxon>Bacteria</taxon>
        <taxon>Bacillati</taxon>
        <taxon>Bacillota</taxon>
        <taxon>Bacilli</taxon>
        <taxon>Bacillales</taxon>
        <taxon>Staphylococcaceae</taxon>
        <taxon>Staphylococcus</taxon>
    </lineage>
</organism>
<comment type="function">
    <text evidence="1">Specifically methylates the N7 position of guanine in position 535 of 16S rRNA.</text>
</comment>
<comment type="subcellular location">
    <subcellularLocation>
        <location evidence="1">Cytoplasm</location>
    </subcellularLocation>
</comment>
<comment type="similarity">
    <text evidence="1">Belongs to the methyltransferase superfamily. RNA methyltransferase RsmG family.</text>
</comment>
<gene>
    <name evidence="1" type="primary">rsmG</name>
    <name type="ordered locus">SAHV_2694</name>
</gene>
<sequence length="239" mass="27373">MTVEWLAEQLKEHNIELTETQKQQFQTYYRLLVEWNEKMNLTSITDEHDVYLKHFYDSIAPSFYFDFNQPISICDVGAGAGFPSIPLKIMFPQLKVTIVDSLNKRIQFLNHLASELQLQDVSFIHDRAETFGKGVYRESYDVVTARAVARLSVLSELCLPLIKKGGQFVALKSSKGEEELEEAKFAISVLGGNVTETHTFKLPEDAGERQMFIIDKKRQTPKKYPRKPGTPNKTPLLEK</sequence>
<feature type="chain" id="PRO_1000010213" description="Ribosomal RNA small subunit methyltransferase G">
    <location>
        <begin position="1"/>
        <end position="239"/>
    </location>
</feature>
<feature type="region of interest" description="Disordered" evidence="2">
    <location>
        <begin position="214"/>
        <end position="239"/>
    </location>
</feature>
<feature type="binding site" evidence="1">
    <location>
        <position position="77"/>
    </location>
    <ligand>
        <name>S-adenosyl-L-methionine</name>
        <dbReference type="ChEBI" id="CHEBI:59789"/>
    </ligand>
</feature>
<feature type="binding site" evidence="1">
    <location>
        <position position="82"/>
    </location>
    <ligand>
        <name>S-adenosyl-L-methionine</name>
        <dbReference type="ChEBI" id="CHEBI:59789"/>
    </ligand>
</feature>
<feature type="binding site" evidence="1">
    <location>
        <begin position="128"/>
        <end position="129"/>
    </location>
    <ligand>
        <name>S-adenosyl-L-methionine</name>
        <dbReference type="ChEBI" id="CHEBI:59789"/>
    </ligand>
</feature>
<feature type="binding site" evidence="1">
    <location>
        <position position="146"/>
    </location>
    <ligand>
        <name>S-adenosyl-L-methionine</name>
        <dbReference type="ChEBI" id="CHEBI:59789"/>
    </ligand>
</feature>
<keyword id="KW-0963">Cytoplasm</keyword>
<keyword id="KW-0489">Methyltransferase</keyword>
<keyword id="KW-0698">rRNA processing</keyword>
<keyword id="KW-0949">S-adenosyl-L-methionine</keyword>
<keyword id="KW-0808">Transferase</keyword>
<reference key="1">
    <citation type="journal article" date="2008" name="Antimicrob. Agents Chemother.">
        <title>Mutated response regulator graR is responsible for phenotypic conversion of Staphylococcus aureus from heterogeneous vancomycin-intermediate resistance to vancomycin-intermediate resistance.</title>
        <authorList>
            <person name="Neoh H.-M."/>
            <person name="Cui L."/>
            <person name="Yuzawa H."/>
            <person name="Takeuchi F."/>
            <person name="Matsuo M."/>
            <person name="Hiramatsu K."/>
        </authorList>
    </citation>
    <scope>NUCLEOTIDE SEQUENCE [LARGE SCALE GENOMIC DNA]</scope>
    <source>
        <strain>Mu3 / ATCC 700698</strain>
    </source>
</reference>
<protein>
    <recommendedName>
        <fullName evidence="1">Ribosomal RNA small subunit methyltransferase G</fullName>
        <ecNumber evidence="1">2.1.1.-</ecNumber>
    </recommendedName>
    <alternativeName>
        <fullName evidence="1">16S rRNA 7-methylguanosine methyltransferase</fullName>
        <shortName evidence="1">16S rRNA m7G methyltransferase</shortName>
    </alternativeName>
</protein>
<proteinExistence type="inferred from homology"/>
<dbReference type="EC" id="2.1.1.-" evidence="1"/>
<dbReference type="EMBL" id="AP009324">
    <property type="protein sequence ID" value="BAF79577.1"/>
    <property type="molecule type" value="Genomic_DNA"/>
</dbReference>
<dbReference type="RefSeq" id="WP_000215587.1">
    <property type="nucleotide sequence ID" value="NC_009782.1"/>
</dbReference>
<dbReference type="SMR" id="A7X7A5"/>
<dbReference type="KEGG" id="saw:SAHV_2694"/>
<dbReference type="HOGENOM" id="CLU_065341_0_0_9"/>
<dbReference type="GO" id="GO:0005829">
    <property type="term" value="C:cytosol"/>
    <property type="evidence" value="ECO:0007669"/>
    <property type="project" value="TreeGrafter"/>
</dbReference>
<dbReference type="GO" id="GO:0070043">
    <property type="term" value="F:rRNA (guanine-N7-)-methyltransferase activity"/>
    <property type="evidence" value="ECO:0007669"/>
    <property type="project" value="UniProtKB-UniRule"/>
</dbReference>
<dbReference type="CDD" id="cd02440">
    <property type="entry name" value="AdoMet_MTases"/>
    <property type="match status" value="1"/>
</dbReference>
<dbReference type="FunFam" id="3.40.50.150:FF:000041">
    <property type="entry name" value="Ribosomal RNA small subunit methyltransferase G"/>
    <property type="match status" value="1"/>
</dbReference>
<dbReference type="Gene3D" id="3.40.50.150">
    <property type="entry name" value="Vaccinia Virus protein VP39"/>
    <property type="match status" value="1"/>
</dbReference>
<dbReference type="HAMAP" id="MF_00074">
    <property type="entry name" value="16SrRNA_methyltr_G"/>
    <property type="match status" value="1"/>
</dbReference>
<dbReference type="InterPro" id="IPR003682">
    <property type="entry name" value="rRNA_ssu_MeTfrase_G"/>
</dbReference>
<dbReference type="InterPro" id="IPR029063">
    <property type="entry name" value="SAM-dependent_MTases_sf"/>
</dbReference>
<dbReference type="NCBIfam" id="TIGR00138">
    <property type="entry name" value="rsmG_gidB"/>
    <property type="match status" value="1"/>
</dbReference>
<dbReference type="PANTHER" id="PTHR31760">
    <property type="entry name" value="S-ADENOSYL-L-METHIONINE-DEPENDENT METHYLTRANSFERASES SUPERFAMILY PROTEIN"/>
    <property type="match status" value="1"/>
</dbReference>
<dbReference type="PANTHER" id="PTHR31760:SF0">
    <property type="entry name" value="S-ADENOSYL-L-METHIONINE-DEPENDENT METHYLTRANSFERASES SUPERFAMILY PROTEIN"/>
    <property type="match status" value="1"/>
</dbReference>
<dbReference type="Pfam" id="PF02527">
    <property type="entry name" value="GidB"/>
    <property type="match status" value="1"/>
</dbReference>
<dbReference type="PIRSF" id="PIRSF003078">
    <property type="entry name" value="GidB"/>
    <property type="match status" value="1"/>
</dbReference>
<dbReference type="SUPFAM" id="SSF53335">
    <property type="entry name" value="S-adenosyl-L-methionine-dependent methyltransferases"/>
    <property type="match status" value="1"/>
</dbReference>
<accession>A7X7A5</accession>
<evidence type="ECO:0000255" key="1">
    <source>
        <dbReference type="HAMAP-Rule" id="MF_00074"/>
    </source>
</evidence>
<evidence type="ECO:0000256" key="2">
    <source>
        <dbReference type="SAM" id="MobiDB-lite"/>
    </source>
</evidence>